<protein>
    <recommendedName>
        <fullName>ATPase expression protein 1, mitochondrial</fullName>
    </recommendedName>
    <alternativeName>
        <fullName>Nuclear control of ATPase messenger RNA expression protein 1</fullName>
    </alternativeName>
</protein>
<proteinExistence type="inferred from homology"/>
<organism>
    <name type="scientific">Saccharomyces cerevisiae (strain YJM789)</name>
    <name type="common">Baker's yeast</name>
    <dbReference type="NCBI Taxonomy" id="307796"/>
    <lineage>
        <taxon>Eukaryota</taxon>
        <taxon>Fungi</taxon>
        <taxon>Dikarya</taxon>
        <taxon>Ascomycota</taxon>
        <taxon>Saccharomycotina</taxon>
        <taxon>Saccharomycetes</taxon>
        <taxon>Saccharomycetales</taxon>
        <taxon>Saccharomycetaceae</taxon>
        <taxon>Saccharomyces</taxon>
    </lineage>
</organism>
<evidence type="ECO:0000250" key="1"/>
<evidence type="ECO:0000255" key="2"/>
<evidence type="ECO:0000305" key="3"/>
<name>AEP1_YEAS7</name>
<feature type="transit peptide" description="Mitochondrion" evidence="2">
    <location>
        <begin position="1"/>
        <end position="19"/>
    </location>
</feature>
<feature type="chain" id="PRO_0000405614" description="ATPase expression protein 1, mitochondrial">
    <location>
        <begin position="20"/>
        <end position="518"/>
    </location>
</feature>
<gene>
    <name type="primary">AEP1</name>
    <name type="synonym">NCA1</name>
    <name type="ORF">SCY_4235</name>
</gene>
<keyword id="KW-0496">Mitochondrion</keyword>
<keyword id="KW-0809">Transit peptide</keyword>
<keyword id="KW-0810">Translation regulation</keyword>
<sequence>MITTVQEISKWRNLWFIRMQSRKWYPVLKKTPLVADGRKIIKHADKVPHPEEIIHPFYQPTAIEQFTACATEYNPSLLDGKKIAPSLIKHPVSLKTILVDSKLKFDDIRGVNRWLMEFVARRQHQRNIVLTPASKSVRSFHVLHLSSTDIAKLRALENVLSEIENTNDLQSRVESVNNELQNIFDRDSKQTRLFCEDILAYLIKNYGNSTEKLILLINVTEMQLYSRLDQMKAMNIILYHILCKVEANENPPYSPTLVTALENLLAAINNRFFPGRCENSLHPIVIEQLLSYFIKTGNLNESKNFLGHLIKKGILPEATIINRYLEAIDVHFDKSTKIFDIRSKFAFIADLAPIIENYGTIDLFKFLIPMCRHFDELCSLLNIIRKSNNAKRAVDSTLPIFIKKVLTFTKDPMINSGNLSTVFNMVSPIYGQNVPSEFVEKFILSFALQGNYTMMAHMIDTYKIKLSHKYQLQIIRALKNSERNHALKNTGAVGYNKEFKKYFIEKYLNCTEREALRP</sequence>
<reference key="1">
    <citation type="journal article" date="2007" name="Proc. Natl. Acad. Sci. U.S.A.">
        <title>Genome sequencing and comparative analysis of Saccharomyces cerevisiae strain YJM789.</title>
        <authorList>
            <person name="Wei W."/>
            <person name="McCusker J.H."/>
            <person name="Hyman R.W."/>
            <person name="Jones T."/>
            <person name="Ning Y."/>
            <person name="Cao Z."/>
            <person name="Gu Z."/>
            <person name="Bruno D."/>
            <person name="Miranda M."/>
            <person name="Nguyen M."/>
            <person name="Wilhelmy J."/>
            <person name="Komp C."/>
            <person name="Tamse R."/>
            <person name="Wang X."/>
            <person name="Jia P."/>
            <person name="Luedi P."/>
            <person name="Oefner P.J."/>
            <person name="David L."/>
            <person name="Dietrich F.S."/>
            <person name="Li Y."/>
            <person name="Davis R.W."/>
            <person name="Steinmetz L.M."/>
        </authorList>
    </citation>
    <scope>NUCLEOTIDE SEQUENCE [LARGE SCALE GENOMIC DNA]</scope>
    <source>
        <strain>YJM789</strain>
    </source>
</reference>
<comment type="function">
    <text evidence="1">Required for translation of the mitochondrial OLI1 transcript encoding subunit 9 of mitochondrial ATP synthase.</text>
</comment>
<comment type="subcellular location">
    <subcellularLocation>
        <location evidence="1">Mitochondrion</location>
    </subcellularLocation>
</comment>
<comment type="similarity">
    <text evidence="3">Belongs to the AEP1 family.</text>
</comment>
<accession>A6ZMC3</accession>
<dbReference type="EMBL" id="AAFW02000020">
    <property type="protein sequence ID" value="EDN64453.1"/>
    <property type="molecule type" value="Genomic_DNA"/>
</dbReference>
<dbReference type="HOGENOM" id="CLU_035453_0_0_1"/>
<dbReference type="Proteomes" id="UP000007060">
    <property type="component" value="Unassembled WGS sequence"/>
</dbReference>
<dbReference type="GO" id="GO:0005739">
    <property type="term" value="C:mitochondrion"/>
    <property type="evidence" value="ECO:0007669"/>
    <property type="project" value="UniProtKB-SubCell"/>
</dbReference>
<dbReference type="GO" id="GO:0045182">
    <property type="term" value="F:translation regulator activity"/>
    <property type="evidence" value="ECO:0007669"/>
    <property type="project" value="InterPro"/>
</dbReference>
<dbReference type="InterPro" id="IPR031467">
    <property type="entry name" value="Aep1"/>
</dbReference>
<dbReference type="Pfam" id="PF17049">
    <property type="entry name" value="AEP1"/>
    <property type="match status" value="1"/>
</dbReference>